<accession>A1V1G6</accession>
<name>URE1_BURMS</name>
<reference key="1">
    <citation type="journal article" date="2010" name="Genome Biol. Evol.">
        <title>Continuing evolution of Burkholderia mallei through genome reduction and large-scale rearrangements.</title>
        <authorList>
            <person name="Losada L."/>
            <person name="Ronning C.M."/>
            <person name="DeShazer D."/>
            <person name="Woods D."/>
            <person name="Fedorova N."/>
            <person name="Kim H.S."/>
            <person name="Shabalina S.A."/>
            <person name="Pearson T.R."/>
            <person name="Brinkac L."/>
            <person name="Tan P."/>
            <person name="Nandi T."/>
            <person name="Crabtree J."/>
            <person name="Badger J."/>
            <person name="Beckstrom-Sternberg S."/>
            <person name="Saqib M."/>
            <person name="Schutzer S.E."/>
            <person name="Keim P."/>
            <person name="Nierman W.C."/>
        </authorList>
    </citation>
    <scope>NUCLEOTIDE SEQUENCE [LARGE SCALE GENOMIC DNA]</scope>
    <source>
        <strain>SAVP1</strain>
    </source>
</reference>
<gene>
    <name evidence="1" type="primary">ureC</name>
    <name type="ordered locus">BMASAVP1_A0723</name>
</gene>
<sequence length="568" mass="60662">MTLRLSRRAYAEMYGPTTGDRIRLADTELLIEVERDHTLYGEEVKFGGGKVIRDGMGQSQLPAADVADTVITNAVILDHWGIVKADIAIKHGRIAAIGKAGNPDIQPGVTIAIGAATEIIAGEGLIVTAGGIDTHIHFISPQQIDEALASGVTTMIGGGTGPATGTNATTCTPGPWHMERMLQAADGWPINLGFLGKGNASRPQPLVEQIEAGAIGLKLHEDWGTTPAAIDNCLTVADDTDTQVAIHTDTLNEAGFVEATVAAFKGRTIHTYHTEGAGGGHAPDILKVCGEANVLPSSTNPTRPYTINTLDEHLDMLMVCHHLDPSIAEDLAFAESRIRRETIAAEDILHDLGALSMLSSDSQAMGRVGEVIIRTWQTAHKMKVQRGALAGDGARNDNFRAKRYVAKYTINPALTHGIAHEVGSIEPGKWADLVLWEPAFFGVKPAMIVKGGMIAVAQMGDPNASIPTPQPVHYREMFATRGGALARTSLTFVSQLALDAGIGARYGLAKRLVPVRGCRTVTKRDMIHNAWQPAIRVDPETYDVVADGALLTCEPAAVLPMAQRYFLF</sequence>
<keyword id="KW-0963">Cytoplasm</keyword>
<keyword id="KW-0378">Hydrolase</keyword>
<keyword id="KW-0479">Metal-binding</keyword>
<keyword id="KW-0533">Nickel</keyword>
<dbReference type="EC" id="3.5.1.5" evidence="1"/>
<dbReference type="EMBL" id="CP000526">
    <property type="protein sequence ID" value="ABM50840.1"/>
    <property type="molecule type" value="Genomic_DNA"/>
</dbReference>
<dbReference type="RefSeq" id="WP_004186033.1">
    <property type="nucleotide sequence ID" value="NC_008785.1"/>
</dbReference>
<dbReference type="SMR" id="A1V1G6"/>
<dbReference type="GeneID" id="92979887"/>
<dbReference type="KEGG" id="bmv:BMASAVP1_A0723"/>
<dbReference type="HOGENOM" id="CLU_000980_0_0_4"/>
<dbReference type="UniPathway" id="UPA00258">
    <property type="reaction ID" value="UER00370"/>
</dbReference>
<dbReference type="GO" id="GO:0005737">
    <property type="term" value="C:cytoplasm"/>
    <property type="evidence" value="ECO:0007669"/>
    <property type="project" value="UniProtKB-SubCell"/>
</dbReference>
<dbReference type="GO" id="GO:0016151">
    <property type="term" value="F:nickel cation binding"/>
    <property type="evidence" value="ECO:0007669"/>
    <property type="project" value="UniProtKB-UniRule"/>
</dbReference>
<dbReference type="GO" id="GO:0009039">
    <property type="term" value="F:urease activity"/>
    <property type="evidence" value="ECO:0007669"/>
    <property type="project" value="UniProtKB-UniRule"/>
</dbReference>
<dbReference type="GO" id="GO:0043419">
    <property type="term" value="P:urea catabolic process"/>
    <property type="evidence" value="ECO:0007669"/>
    <property type="project" value="UniProtKB-UniRule"/>
</dbReference>
<dbReference type="CDD" id="cd00375">
    <property type="entry name" value="Urease_alpha"/>
    <property type="match status" value="1"/>
</dbReference>
<dbReference type="Gene3D" id="3.20.20.140">
    <property type="entry name" value="Metal-dependent hydrolases"/>
    <property type="match status" value="1"/>
</dbReference>
<dbReference type="Gene3D" id="2.30.40.10">
    <property type="entry name" value="Urease, subunit C, domain 1"/>
    <property type="match status" value="1"/>
</dbReference>
<dbReference type="HAMAP" id="MF_01953">
    <property type="entry name" value="Urease_alpha"/>
    <property type="match status" value="1"/>
</dbReference>
<dbReference type="InterPro" id="IPR006680">
    <property type="entry name" value="Amidohydro-rel"/>
</dbReference>
<dbReference type="InterPro" id="IPR011059">
    <property type="entry name" value="Metal-dep_hydrolase_composite"/>
</dbReference>
<dbReference type="InterPro" id="IPR032466">
    <property type="entry name" value="Metal_Hydrolase"/>
</dbReference>
<dbReference type="InterPro" id="IPR011612">
    <property type="entry name" value="Urease_alpha_N_dom"/>
</dbReference>
<dbReference type="InterPro" id="IPR050112">
    <property type="entry name" value="Urease_alpha_subunit"/>
</dbReference>
<dbReference type="InterPro" id="IPR017950">
    <property type="entry name" value="Urease_AS"/>
</dbReference>
<dbReference type="InterPro" id="IPR005848">
    <property type="entry name" value="Urease_asu"/>
</dbReference>
<dbReference type="InterPro" id="IPR017951">
    <property type="entry name" value="Urease_asu_c"/>
</dbReference>
<dbReference type="InterPro" id="IPR029754">
    <property type="entry name" value="Urease_Ni-bd"/>
</dbReference>
<dbReference type="NCBIfam" id="NF009685">
    <property type="entry name" value="PRK13206.1"/>
    <property type="match status" value="1"/>
</dbReference>
<dbReference type="NCBIfam" id="NF009686">
    <property type="entry name" value="PRK13207.1"/>
    <property type="match status" value="1"/>
</dbReference>
<dbReference type="NCBIfam" id="TIGR01792">
    <property type="entry name" value="urease_alph"/>
    <property type="match status" value="1"/>
</dbReference>
<dbReference type="PANTHER" id="PTHR43440">
    <property type="entry name" value="UREASE"/>
    <property type="match status" value="1"/>
</dbReference>
<dbReference type="PANTHER" id="PTHR43440:SF1">
    <property type="entry name" value="UREASE"/>
    <property type="match status" value="1"/>
</dbReference>
<dbReference type="Pfam" id="PF01979">
    <property type="entry name" value="Amidohydro_1"/>
    <property type="match status" value="1"/>
</dbReference>
<dbReference type="Pfam" id="PF00449">
    <property type="entry name" value="Urease_alpha"/>
    <property type="match status" value="1"/>
</dbReference>
<dbReference type="PRINTS" id="PR01752">
    <property type="entry name" value="UREASE"/>
</dbReference>
<dbReference type="SUPFAM" id="SSF51338">
    <property type="entry name" value="Composite domain of metallo-dependent hydrolases"/>
    <property type="match status" value="2"/>
</dbReference>
<dbReference type="SUPFAM" id="SSF51556">
    <property type="entry name" value="Metallo-dependent hydrolases"/>
    <property type="match status" value="1"/>
</dbReference>
<dbReference type="PROSITE" id="PS01120">
    <property type="entry name" value="UREASE_1"/>
    <property type="match status" value="1"/>
</dbReference>
<dbReference type="PROSITE" id="PS00145">
    <property type="entry name" value="UREASE_2"/>
    <property type="match status" value="1"/>
</dbReference>
<dbReference type="PROSITE" id="PS51368">
    <property type="entry name" value="UREASE_3"/>
    <property type="match status" value="1"/>
</dbReference>
<proteinExistence type="inferred from homology"/>
<feature type="chain" id="PRO_1000070651" description="Urease subunit alpha">
    <location>
        <begin position="1"/>
        <end position="568"/>
    </location>
</feature>
<feature type="domain" description="Urease" evidence="1">
    <location>
        <begin position="130"/>
        <end position="568"/>
    </location>
</feature>
<feature type="active site" description="Proton donor" evidence="1">
    <location>
        <position position="321"/>
    </location>
</feature>
<feature type="binding site" evidence="1">
    <location>
        <position position="135"/>
    </location>
    <ligand>
        <name>Ni(2+)</name>
        <dbReference type="ChEBI" id="CHEBI:49786"/>
        <label>1</label>
    </ligand>
</feature>
<feature type="binding site" evidence="1">
    <location>
        <position position="137"/>
    </location>
    <ligand>
        <name>Ni(2+)</name>
        <dbReference type="ChEBI" id="CHEBI:49786"/>
        <label>1</label>
    </ligand>
</feature>
<feature type="binding site" description="via carbamate group" evidence="1">
    <location>
        <position position="218"/>
    </location>
    <ligand>
        <name>Ni(2+)</name>
        <dbReference type="ChEBI" id="CHEBI:49786"/>
        <label>1</label>
    </ligand>
</feature>
<feature type="binding site" description="via carbamate group" evidence="1">
    <location>
        <position position="218"/>
    </location>
    <ligand>
        <name>Ni(2+)</name>
        <dbReference type="ChEBI" id="CHEBI:49786"/>
        <label>2</label>
    </ligand>
</feature>
<feature type="binding site" evidence="1">
    <location>
        <position position="220"/>
    </location>
    <ligand>
        <name>substrate</name>
    </ligand>
</feature>
<feature type="binding site" evidence="1">
    <location>
        <position position="247"/>
    </location>
    <ligand>
        <name>Ni(2+)</name>
        <dbReference type="ChEBI" id="CHEBI:49786"/>
        <label>2</label>
    </ligand>
</feature>
<feature type="binding site" evidence="1">
    <location>
        <position position="273"/>
    </location>
    <ligand>
        <name>Ni(2+)</name>
        <dbReference type="ChEBI" id="CHEBI:49786"/>
        <label>2</label>
    </ligand>
</feature>
<feature type="binding site" evidence="1">
    <location>
        <position position="361"/>
    </location>
    <ligand>
        <name>Ni(2+)</name>
        <dbReference type="ChEBI" id="CHEBI:49786"/>
        <label>1</label>
    </ligand>
</feature>
<feature type="modified residue" description="N6-carboxylysine" evidence="1">
    <location>
        <position position="218"/>
    </location>
</feature>
<organism>
    <name type="scientific">Burkholderia mallei (strain SAVP1)</name>
    <dbReference type="NCBI Taxonomy" id="320388"/>
    <lineage>
        <taxon>Bacteria</taxon>
        <taxon>Pseudomonadati</taxon>
        <taxon>Pseudomonadota</taxon>
        <taxon>Betaproteobacteria</taxon>
        <taxon>Burkholderiales</taxon>
        <taxon>Burkholderiaceae</taxon>
        <taxon>Burkholderia</taxon>
        <taxon>pseudomallei group</taxon>
    </lineage>
</organism>
<evidence type="ECO:0000255" key="1">
    <source>
        <dbReference type="HAMAP-Rule" id="MF_01953"/>
    </source>
</evidence>
<protein>
    <recommendedName>
        <fullName evidence="1">Urease subunit alpha</fullName>
        <ecNumber evidence="1">3.5.1.5</ecNumber>
    </recommendedName>
    <alternativeName>
        <fullName evidence="1">Urea amidohydrolase subunit alpha</fullName>
    </alternativeName>
</protein>
<comment type="catalytic activity">
    <reaction evidence="1">
        <text>urea + 2 H2O + H(+) = hydrogencarbonate + 2 NH4(+)</text>
        <dbReference type="Rhea" id="RHEA:20557"/>
        <dbReference type="ChEBI" id="CHEBI:15377"/>
        <dbReference type="ChEBI" id="CHEBI:15378"/>
        <dbReference type="ChEBI" id="CHEBI:16199"/>
        <dbReference type="ChEBI" id="CHEBI:17544"/>
        <dbReference type="ChEBI" id="CHEBI:28938"/>
        <dbReference type="EC" id="3.5.1.5"/>
    </reaction>
</comment>
<comment type="cofactor">
    <cofactor evidence="1">
        <name>Ni cation</name>
        <dbReference type="ChEBI" id="CHEBI:25516"/>
    </cofactor>
    <text evidence="1">Binds 2 nickel ions per subunit.</text>
</comment>
<comment type="pathway">
    <text evidence="1">Nitrogen metabolism; urea degradation; CO(2) and NH(3) from urea (urease route): step 1/1.</text>
</comment>
<comment type="subunit">
    <text evidence="1">Heterotrimer of UreA (gamma), UreB (beta) and UreC (alpha) subunits. Three heterotrimers associate to form the active enzyme.</text>
</comment>
<comment type="subcellular location">
    <subcellularLocation>
        <location evidence="1">Cytoplasm</location>
    </subcellularLocation>
</comment>
<comment type="PTM">
    <text evidence="1">Carboxylation allows a single lysine to coordinate two nickel ions.</text>
</comment>
<comment type="similarity">
    <text evidence="1">Belongs to the metallo-dependent hydrolases superfamily. Urease alpha subunit family.</text>
</comment>